<dbReference type="EC" id="2.7.7.38" evidence="1"/>
<dbReference type="EMBL" id="CP000150">
    <property type="protein sequence ID" value="ABB06434.1"/>
    <property type="molecule type" value="Genomic_DNA"/>
</dbReference>
<dbReference type="RefSeq" id="WP_011350077.1">
    <property type="nucleotide sequence ID" value="NC_007509.1"/>
</dbReference>
<dbReference type="SMR" id="Q39M82"/>
<dbReference type="GeneID" id="45092763"/>
<dbReference type="KEGG" id="bur:Bcep18194_C7390"/>
<dbReference type="PATRIC" id="fig|482957.22.peg.7983"/>
<dbReference type="HOGENOM" id="CLU_065038_1_0_4"/>
<dbReference type="UniPathway" id="UPA00030"/>
<dbReference type="UniPathway" id="UPA00358">
    <property type="reaction ID" value="UER00476"/>
</dbReference>
<dbReference type="Proteomes" id="UP000002705">
    <property type="component" value="Chromosome 3"/>
</dbReference>
<dbReference type="GO" id="GO:0005829">
    <property type="term" value="C:cytosol"/>
    <property type="evidence" value="ECO:0007669"/>
    <property type="project" value="TreeGrafter"/>
</dbReference>
<dbReference type="GO" id="GO:0008690">
    <property type="term" value="F:3-deoxy-manno-octulosonate cytidylyltransferase activity"/>
    <property type="evidence" value="ECO:0007669"/>
    <property type="project" value="UniProtKB-UniRule"/>
</dbReference>
<dbReference type="GO" id="GO:0033468">
    <property type="term" value="P:CMP-keto-3-deoxy-D-manno-octulosonic acid biosynthetic process"/>
    <property type="evidence" value="ECO:0007669"/>
    <property type="project" value="UniProtKB-UniRule"/>
</dbReference>
<dbReference type="GO" id="GO:0009103">
    <property type="term" value="P:lipopolysaccharide biosynthetic process"/>
    <property type="evidence" value="ECO:0007669"/>
    <property type="project" value="UniProtKB-UniRule"/>
</dbReference>
<dbReference type="Gene3D" id="3.90.550.10">
    <property type="entry name" value="Spore Coat Polysaccharide Biosynthesis Protein SpsA, Chain A"/>
    <property type="match status" value="1"/>
</dbReference>
<dbReference type="HAMAP" id="MF_00057">
    <property type="entry name" value="KdsB"/>
    <property type="match status" value="1"/>
</dbReference>
<dbReference type="InterPro" id="IPR003329">
    <property type="entry name" value="Cytidylyl_trans"/>
</dbReference>
<dbReference type="InterPro" id="IPR004528">
    <property type="entry name" value="KdsB"/>
</dbReference>
<dbReference type="InterPro" id="IPR029044">
    <property type="entry name" value="Nucleotide-diphossugar_trans"/>
</dbReference>
<dbReference type="NCBIfam" id="TIGR00466">
    <property type="entry name" value="kdsB"/>
    <property type="match status" value="1"/>
</dbReference>
<dbReference type="NCBIfam" id="NF003952">
    <property type="entry name" value="PRK05450.1-5"/>
    <property type="match status" value="1"/>
</dbReference>
<dbReference type="PANTHER" id="PTHR42866">
    <property type="entry name" value="3-DEOXY-MANNO-OCTULOSONATE CYTIDYLYLTRANSFERASE"/>
    <property type="match status" value="1"/>
</dbReference>
<dbReference type="PANTHER" id="PTHR42866:SF2">
    <property type="entry name" value="3-DEOXY-MANNO-OCTULOSONATE CYTIDYLYLTRANSFERASE, MITOCHONDRIAL"/>
    <property type="match status" value="1"/>
</dbReference>
<dbReference type="Pfam" id="PF02348">
    <property type="entry name" value="CTP_transf_3"/>
    <property type="match status" value="1"/>
</dbReference>
<dbReference type="SUPFAM" id="SSF53448">
    <property type="entry name" value="Nucleotide-diphospho-sugar transferases"/>
    <property type="match status" value="1"/>
</dbReference>
<organism>
    <name type="scientific">Burkholderia lata (strain ATCC 17760 / DSM 23089 / LMG 22485 / NCIMB 9086 / R18194 / 383)</name>
    <dbReference type="NCBI Taxonomy" id="482957"/>
    <lineage>
        <taxon>Bacteria</taxon>
        <taxon>Pseudomonadati</taxon>
        <taxon>Pseudomonadota</taxon>
        <taxon>Betaproteobacteria</taxon>
        <taxon>Burkholderiales</taxon>
        <taxon>Burkholderiaceae</taxon>
        <taxon>Burkholderia</taxon>
        <taxon>Burkholderia cepacia complex</taxon>
    </lineage>
</organism>
<feature type="chain" id="PRO_0000370040" description="3-deoxy-manno-octulosonate cytidylyltransferase 2">
    <location>
        <begin position="1"/>
        <end position="265"/>
    </location>
</feature>
<keyword id="KW-0963">Cytoplasm</keyword>
<keyword id="KW-0448">Lipopolysaccharide biosynthesis</keyword>
<keyword id="KW-0548">Nucleotidyltransferase</keyword>
<keyword id="KW-0808">Transferase</keyword>
<accession>Q39M82</accession>
<reference key="1">
    <citation type="submission" date="2005-10" db="EMBL/GenBank/DDBJ databases">
        <title>Complete sequence of chromosome 3 of Burkholderia sp. 383.</title>
        <authorList>
            <consortium name="US DOE Joint Genome Institute"/>
            <person name="Copeland A."/>
            <person name="Lucas S."/>
            <person name="Lapidus A."/>
            <person name="Barry K."/>
            <person name="Detter J.C."/>
            <person name="Glavina T."/>
            <person name="Hammon N."/>
            <person name="Israni S."/>
            <person name="Pitluck S."/>
            <person name="Chain P."/>
            <person name="Malfatti S."/>
            <person name="Shin M."/>
            <person name="Vergez L."/>
            <person name="Schmutz J."/>
            <person name="Larimer F."/>
            <person name="Land M."/>
            <person name="Kyrpides N."/>
            <person name="Lykidis A."/>
            <person name="Richardson P."/>
        </authorList>
    </citation>
    <scope>NUCLEOTIDE SEQUENCE [LARGE SCALE GENOMIC DNA]</scope>
    <source>
        <strain>ATCC 17760 / DSM 23089 / LMG 22485 / NCIMB 9086 / R18194 / 383</strain>
    </source>
</reference>
<sequence>MTSFNSGRPVHVVIPARYGSTRLPGKPLVDLAGEPMIARVHARVSRALPGADIVVAIDDARIAAALDARGIRFAMTGAHHASGTDRAAELARVSGWHDTDVVLNVQGDEPLVPEALLKAFADFCVAAPDLGIATVACPVGDAALLDEPGIVKLVVDRRGRALYFSRAAIPFCRDGRSAGADLGGHLRHIGLYGYSNAALQALAHTAPCELEQLEQLEQLRALWLGMPIDVMRWPDAPPAGVDTPDDVARVVSLLKRQTQDETEPY</sequence>
<comment type="function">
    <text evidence="1">Activates KDO (a required 8-carbon sugar) for incorporation into bacterial lipopolysaccharide in Gram-negative bacteria.</text>
</comment>
<comment type="catalytic activity">
    <reaction evidence="1">
        <text>3-deoxy-alpha-D-manno-oct-2-ulosonate + CTP = CMP-3-deoxy-beta-D-manno-octulosonate + diphosphate</text>
        <dbReference type="Rhea" id="RHEA:23448"/>
        <dbReference type="ChEBI" id="CHEBI:33019"/>
        <dbReference type="ChEBI" id="CHEBI:37563"/>
        <dbReference type="ChEBI" id="CHEBI:85986"/>
        <dbReference type="ChEBI" id="CHEBI:85987"/>
        <dbReference type="EC" id="2.7.7.38"/>
    </reaction>
</comment>
<comment type="pathway">
    <text evidence="1">Nucleotide-sugar biosynthesis; CMP-3-deoxy-D-manno-octulosonate biosynthesis; CMP-3-deoxy-D-manno-octulosonate from 3-deoxy-D-manno-octulosonate and CTP: step 1/1.</text>
</comment>
<comment type="pathway">
    <text evidence="1">Bacterial outer membrane biogenesis; lipopolysaccharide biosynthesis.</text>
</comment>
<comment type="subcellular location">
    <subcellularLocation>
        <location evidence="1">Cytoplasm</location>
    </subcellularLocation>
</comment>
<comment type="similarity">
    <text evidence="1">Belongs to the KdsB family.</text>
</comment>
<evidence type="ECO:0000255" key="1">
    <source>
        <dbReference type="HAMAP-Rule" id="MF_00057"/>
    </source>
</evidence>
<name>KDSB2_BURL3</name>
<gene>
    <name evidence="1" type="primary">kdsB2</name>
    <name type="ordered locus">Bcep18194_C7390</name>
</gene>
<proteinExistence type="inferred from homology"/>
<protein>
    <recommendedName>
        <fullName evidence="1">3-deoxy-manno-octulosonate cytidylyltransferase 2</fullName>
        <ecNumber evidence="1">2.7.7.38</ecNumber>
    </recommendedName>
    <alternativeName>
        <fullName evidence="1">CMP-2-keto-3-deoxyoctulosonic acid synthase 2</fullName>
        <shortName evidence="1">CKS 2</shortName>
        <shortName evidence="1">CMP-KDO synthase 2</shortName>
    </alternativeName>
</protein>